<comment type="function">
    <text evidence="1">Succinyl-CoA synthetase functions in the citric acid cycle (TCA), coupling the hydrolysis of succinyl-CoA to the synthesis of either ATP or GTP and thus represents the only step of substrate-level phosphorylation in the TCA. The beta subunit provides nucleotide specificity of the enzyme and binds the substrate succinate, while the binding sites for coenzyme A and phosphate are found in the alpha subunit.</text>
</comment>
<comment type="catalytic activity">
    <reaction evidence="1">
        <text>succinate + ATP + CoA = succinyl-CoA + ADP + phosphate</text>
        <dbReference type="Rhea" id="RHEA:17661"/>
        <dbReference type="ChEBI" id="CHEBI:30031"/>
        <dbReference type="ChEBI" id="CHEBI:30616"/>
        <dbReference type="ChEBI" id="CHEBI:43474"/>
        <dbReference type="ChEBI" id="CHEBI:57287"/>
        <dbReference type="ChEBI" id="CHEBI:57292"/>
        <dbReference type="ChEBI" id="CHEBI:456216"/>
        <dbReference type="EC" id="6.2.1.5"/>
    </reaction>
    <physiologicalReaction direction="right-to-left" evidence="1">
        <dbReference type="Rhea" id="RHEA:17663"/>
    </physiologicalReaction>
</comment>
<comment type="catalytic activity">
    <reaction evidence="1">
        <text>GTP + succinate + CoA = succinyl-CoA + GDP + phosphate</text>
        <dbReference type="Rhea" id="RHEA:22120"/>
        <dbReference type="ChEBI" id="CHEBI:30031"/>
        <dbReference type="ChEBI" id="CHEBI:37565"/>
        <dbReference type="ChEBI" id="CHEBI:43474"/>
        <dbReference type="ChEBI" id="CHEBI:57287"/>
        <dbReference type="ChEBI" id="CHEBI:57292"/>
        <dbReference type="ChEBI" id="CHEBI:58189"/>
    </reaction>
    <physiologicalReaction direction="right-to-left" evidence="1">
        <dbReference type="Rhea" id="RHEA:22122"/>
    </physiologicalReaction>
</comment>
<comment type="cofactor">
    <cofactor evidence="1">
        <name>Mg(2+)</name>
        <dbReference type="ChEBI" id="CHEBI:18420"/>
    </cofactor>
    <text evidence="1">Binds 1 Mg(2+) ion per subunit.</text>
</comment>
<comment type="pathway">
    <text evidence="1">Carbohydrate metabolism; tricarboxylic acid cycle; succinate from succinyl-CoA (ligase route): step 1/1.</text>
</comment>
<comment type="subunit">
    <text evidence="1">Heterotetramer of two alpha and two beta subunits.</text>
</comment>
<comment type="similarity">
    <text evidence="1">Belongs to the succinate/malate CoA ligase beta subunit family.</text>
</comment>
<sequence length="388" mass="41543">MNLHEYQGKQLFAEYGLPVSKGFAVDTPEEAAEACDKIGGSEWVVKAQVHAGGRGKAGGVKLVKSKEDAKAFAQQWLGKNLVTYQTDANGQPVSKILVESCTDIDKELYLGAVVDRSSRRIVFMASTEGGVDIEKVAHDTPEKILKATIDPLVGAQPYQGRELAFQLGLKGDQIKQFTHIFVGLAKLFQDYDLALLEVNPLVIKKDGNLHCLDAKINIDSNALYRQPKLRAMHDPSQDDAREAHAQKWELNYVALEGNIGCMVNGAGLAMGTMDIVNLHGGKPANFLDVGGGATKERVTEAFKIILSDSNVKAVLVNIFGGIVRCDMIAEGIIGAVKEVGVKVPVVVRLEGNNAELGAKVLAESGLNIIAATSLTDAAQQVVKAAEGK</sequence>
<name>SUCC_PSEA8</name>
<dbReference type="EC" id="6.2.1.5" evidence="1"/>
<dbReference type="EMBL" id="FM209186">
    <property type="protein sequence ID" value="CAW28466.1"/>
    <property type="molecule type" value="Genomic_DNA"/>
</dbReference>
<dbReference type="RefSeq" id="WP_003087425.1">
    <property type="nucleotide sequence ID" value="NC_011770.1"/>
</dbReference>
<dbReference type="SMR" id="B7UVD3"/>
<dbReference type="KEGG" id="pag:PLES_37391"/>
<dbReference type="HOGENOM" id="CLU_037430_0_2_6"/>
<dbReference type="UniPathway" id="UPA00223">
    <property type="reaction ID" value="UER00999"/>
</dbReference>
<dbReference type="GO" id="GO:0005829">
    <property type="term" value="C:cytosol"/>
    <property type="evidence" value="ECO:0007669"/>
    <property type="project" value="TreeGrafter"/>
</dbReference>
<dbReference type="GO" id="GO:0042709">
    <property type="term" value="C:succinate-CoA ligase complex"/>
    <property type="evidence" value="ECO:0007669"/>
    <property type="project" value="TreeGrafter"/>
</dbReference>
<dbReference type="GO" id="GO:0005524">
    <property type="term" value="F:ATP binding"/>
    <property type="evidence" value="ECO:0007669"/>
    <property type="project" value="UniProtKB-UniRule"/>
</dbReference>
<dbReference type="GO" id="GO:0000287">
    <property type="term" value="F:magnesium ion binding"/>
    <property type="evidence" value="ECO:0007669"/>
    <property type="project" value="UniProtKB-UniRule"/>
</dbReference>
<dbReference type="GO" id="GO:0004775">
    <property type="term" value="F:succinate-CoA ligase (ADP-forming) activity"/>
    <property type="evidence" value="ECO:0007669"/>
    <property type="project" value="UniProtKB-UniRule"/>
</dbReference>
<dbReference type="GO" id="GO:0004776">
    <property type="term" value="F:succinate-CoA ligase (GDP-forming) activity"/>
    <property type="evidence" value="ECO:0007669"/>
    <property type="project" value="RHEA"/>
</dbReference>
<dbReference type="GO" id="GO:0006104">
    <property type="term" value="P:succinyl-CoA metabolic process"/>
    <property type="evidence" value="ECO:0007669"/>
    <property type="project" value="TreeGrafter"/>
</dbReference>
<dbReference type="GO" id="GO:0006099">
    <property type="term" value="P:tricarboxylic acid cycle"/>
    <property type="evidence" value="ECO:0007669"/>
    <property type="project" value="UniProtKB-UniRule"/>
</dbReference>
<dbReference type="FunFam" id="3.30.1490.20:FF:000002">
    <property type="entry name" value="Succinate--CoA ligase [ADP-forming] subunit beta"/>
    <property type="match status" value="1"/>
</dbReference>
<dbReference type="FunFam" id="3.30.470.20:FF:000002">
    <property type="entry name" value="Succinate--CoA ligase [ADP-forming] subunit beta"/>
    <property type="match status" value="1"/>
</dbReference>
<dbReference type="FunFam" id="3.40.50.261:FF:000001">
    <property type="entry name" value="Succinate--CoA ligase [ADP-forming] subunit beta"/>
    <property type="match status" value="1"/>
</dbReference>
<dbReference type="Gene3D" id="3.30.1490.20">
    <property type="entry name" value="ATP-grasp fold, A domain"/>
    <property type="match status" value="1"/>
</dbReference>
<dbReference type="Gene3D" id="3.30.470.20">
    <property type="entry name" value="ATP-grasp fold, B domain"/>
    <property type="match status" value="1"/>
</dbReference>
<dbReference type="Gene3D" id="3.40.50.261">
    <property type="entry name" value="Succinyl-CoA synthetase domains"/>
    <property type="match status" value="1"/>
</dbReference>
<dbReference type="HAMAP" id="MF_00558">
    <property type="entry name" value="Succ_CoA_beta"/>
    <property type="match status" value="1"/>
</dbReference>
<dbReference type="InterPro" id="IPR011761">
    <property type="entry name" value="ATP-grasp"/>
</dbReference>
<dbReference type="InterPro" id="IPR013650">
    <property type="entry name" value="ATP-grasp_succ-CoA_synth-type"/>
</dbReference>
<dbReference type="InterPro" id="IPR013815">
    <property type="entry name" value="ATP_grasp_subdomain_1"/>
</dbReference>
<dbReference type="InterPro" id="IPR017866">
    <property type="entry name" value="Succ-CoA_synthase_bsu_CS"/>
</dbReference>
<dbReference type="InterPro" id="IPR005811">
    <property type="entry name" value="SUCC_ACL_C"/>
</dbReference>
<dbReference type="InterPro" id="IPR005809">
    <property type="entry name" value="Succ_CoA_ligase-like_bsu"/>
</dbReference>
<dbReference type="InterPro" id="IPR016102">
    <property type="entry name" value="Succinyl-CoA_synth-like"/>
</dbReference>
<dbReference type="NCBIfam" id="NF001913">
    <property type="entry name" value="PRK00696.1"/>
    <property type="match status" value="1"/>
</dbReference>
<dbReference type="NCBIfam" id="TIGR01016">
    <property type="entry name" value="sucCoAbeta"/>
    <property type="match status" value="1"/>
</dbReference>
<dbReference type="PANTHER" id="PTHR11815:SF10">
    <property type="entry name" value="SUCCINATE--COA LIGASE [GDP-FORMING] SUBUNIT BETA, MITOCHONDRIAL"/>
    <property type="match status" value="1"/>
</dbReference>
<dbReference type="PANTHER" id="PTHR11815">
    <property type="entry name" value="SUCCINYL-COA SYNTHETASE BETA CHAIN"/>
    <property type="match status" value="1"/>
</dbReference>
<dbReference type="Pfam" id="PF08442">
    <property type="entry name" value="ATP-grasp_2"/>
    <property type="match status" value="1"/>
</dbReference>
<dbReference type="Pfam" id="PF00549">
    <property type="entry name" value="Ligase_CoA"/>
    <property type="match status" value="1"/>
</dbReference>
<dbReference type="PIRSF" id="PIRSF001554">
    <property type="entry name" value="SucCS_beta"/>
    <property type="match status" value="1"/>
</dbReference>
<dbReference type="SUPFAM" id="SSF56059">
    <property type="entry name" value="Glutathione synthetase ATP-binding domain-like"/>
    <property type="match status" value="1"/>
</dbReference>
<dbReference type="SUPFAM" id="SSF52210">
    <property type="entry name" value="Succinyl-CoA synthetase domains"/>
    <property type="match status" value="1"/>
</dbReference>
<dbReference type="PROSITE" id="PS50975">
    <property type="entry name" value="ATP_GRASP"/>
    <property type="match status" value="1"/>
</dbReference>
<dbReference type="PROSITE" id="PS01217">
    <property type="entry name" value="SUCCINYL_COA_LIG_3"/>
    <property type="match status" value="1"/>
</dbReference>
<protein>
    <recommendedName>
        <fullName evidence="1">Succinate--CoA ligase [ADP-forming] subunit beta</fullName>
        <ecNumber evidence="1">6.2.1.5</ecNumber>
    </recommendedName>
    <alternativeName>
        <fullName evidence="1">Succinyl-CoA synthetase subunit beta</fullName>
        <shortName evidence="1">SCS-beta</shortName>
    </alternativeName>
</protein>
<gene>
    <name evidence="1" type="primary">sucC</name>
    <name type="ordered locus">PLES_37391</name>
</gene>
<proteinExistence type="inferred from homology"/>
<feature type="chain" id="PRO_1000129211" description="Succinate--CoA ligase [ADP-forming] subunit beta">
    <location>
        <begin position="1"/>
        <end position="388"/>
    </location>
</feature>
<feature type="domain" description="ATP-grasp" evidence="1">
    <location>
        <begin position="9"/>
        <end position="244"/>
    </location>
</feature>
<feature type="binding site" evidence="1">
    <location>
        <position position="46"/>
    </location>
    <ligand>
        <name>ATP</name>
        <dbReference type="ChEBI" id="CHEBI:30616"/>
    </ligand>
</feature>
<feature type="binding site" evidence="1">
    <location>
        <begin position="53"/>
        <end position="55"/>
    </location>
    <ligand>
        <name>ATP</name>
        <dbReference type="ChEBI" id="CHEBI:30616"/>
    </ligand>
</feature>
<feature type="binding site" evidence="1">
    <location>
        <position position="99"/>
    </location>
    <ligand>
        <name>ATP</name>
        <dbReference type="ChEBI" id="CHEBI:30616"/>
    </ligand>
</feature>
<feature type="binding site" evidence="1">
    <location>
        <position position="102"/>
    </location>
    <ligand>
        <name>ATP</name>
        <dbReference type="ChEBI" id="CHEBI:30616"/>
    </ligand>
</feature>
<feature type="binding site" evidence="1">
    <location>
        <position position="107"/>
    </location>
    <ligand>
        <name>ATP</name>
        <dbReference type="ChEBI" id="CHEBI:30616"/>
    </ligand>
</feature>
<feature type="binding site" evidence="1">
    <location>
        <position position="199"/>
    </location>
    <ligand>
        <name>Mg(2+)</name>
        <dbReference type="ChEBI" id="CHEBI:18420"/>
    </ligand>
</feature>
<feature type="binding site" evidence="1">
    <location>
        <position position="213"/>
    </location>
    <ligand>
        <name>Mg(2+)</name>
        <dbReference type="ChEBI" id="CHEBI:18420"/>
    </ligand>
</feature>
<feature type="binding site" evidence="1">
    <location>
        <position position="264"/>
    </location>
    <ligand>
        <name>substrate</name>
        <note>ligand shared with subunit alpha</note>
    </ligand>
</feature>
<feature type="binding site" evidence="1">
    <location>
        <begin position="321"/>
        <end position="323"/>
    </location>
    <ligand>
        <name>substrate</name>
        <note>ligand shared with subunit alpha</note>
    </ligand>
</feature>
<organism>
    <name type="scientific">Pseudomonas aeruginosa (strain LESB58)</name>
    <dbReference type="NCBI Taxonomy" id="557722"/>
    <lineage>
        <taxon>Bacteria</taxon>
        <taxon>Pseudomonadati</taxon>
        <taxon>Pseudomonadota</taxon>
        <taxon>Gammaproteobacteria</taxon>
        <taxon>Pseudomonadales</taxon>
        <taxon>Pseudomonadaceae</taxon>
        <taxon>Pseudomonas</taxon>
    </lineage>
</organism>
<evidence type="ECO:0000255" key="1">
    <source>
        <dbReference type="HAMAP-Rule" id="MF_00558"/>
    </source>
</evidence>
<accession>B7UVD3</accession>
<keyword id="KW-0067">ATP-binding</keyword>
<keyword id="KW-0436">Ligase</keyword>
<keyword id="KW-0460">Magnesium</keyword>
<keyword id="KW-0479">Metal-binding</keyword>
<keyword id="KW-0547">Nucleotide-binding</keyword>
<keyword id="KW-0816">Tricarboxylic acid cycle</keyword>
<reference key="1">
    <citation type="journal article" date="2009" name="Genome Res.">
        <title>Newly introduced genomic prophage islands are critical determinants of in vivo competitiveness in the Liverpool epidemic strain of Pseudomonas aeruginosa.</title>
        <authorList>
            <person name="Winstanley C."/>
            <person name="Langille M.G.I."/>
            <person name="Fothergill J.L."/>
            <person name="Kukavica-Ibrulj I."/>
            <person name="Paradis-Bleau C."/>
            <person name="Sanschagrin F."/>
            <person name="Thomson N.R."/>
            <person name="Winsor G.L."/>
            <person name="Quail M.A."/>
            <person name="Lennard N."/>
            <person name="Bignell A."/>
            <person name="Clarke L."/>
            <person name="Seeger K."/>
            <person name="Saunders D."/>
            <person name="Harris D."/>
            <person name="Parkhill J."/>
            <person name="Hancock R.E.W."/>
            <person name="Brinkman F.S.L."/>
            <person name="Levesque R.C."/>
        </authorList>
    </citation>
    <scope>NUCLEOTIDE SEQUENCE [LARGE SCALE GENOMIC DNA]</scope>
    <source>
        <strain>LESB58</strain>
    </source>
</reference>